<dbReference type="EC" id="2.1.1.163" evidence="1"/>
<dbReference type="EC" id="2.1.1.201" evidence="1"/>
<dbReference type="EMBL" id="AE009442">
    <property type="protein sequence ID" value="AAO28573.1"/>
    <property type="molecule type" value="Genomic_DNA"/>
</dbReference>
<dbReference type="RefSeq" id="WP_004089034.1">
    <property type="nucleotide sequence ID" value="NC_004556.1"/>
</dbReference>
<dbReference type="SMR" id="Q87DI1"/>
<dbReference type="GeneID" id="93904484"/>
<dbReference type="KEGG" id="xft:PD_0704"/>
<dbReference type="HOGENOM" id="CLU_037990_0_0_6"/>
<dbReference type="UniPathway" id="UPA00079">
    <property type="reaction ID" value="UER00169"/>
</dbReference>
<dbReference type="UniPathway" id="UPA00232"/>
<dbReference type="Proteomes" id="UP000002516">
    <property type="component" value="Chromosome"/>
</dbReference>
<dbReference type="GO" id="GO:0008425">
    <property type="term" value="F:2-methoxy-6-polyprenyl-1,4-benzoquinol methyltransferase activity"/>
    <property type="evidence" value="ECO:0007669"/>
    <property type="project" value="UniProtKB-UniRule"/>
</dbReference>
<dbReference type="GO" id="GO:0043770">
    <property type="term" value="F:demethylmenaquinone methyltransferase activity"/>
    <property type="evidence" value="ECO:0007669"/>
    <property type="project" value="UniProtKB-UniRule"/>
</dbReference>
<dbReference type="GO" id="GO:0009060">
    <property type="term" value="P:aerobic respiration"/>
    <property type="evidence" value="ECO:0007669"/>
    <property type="project" value="UniProtKB-UniRule"/>
</dbReference>
<dbReference type="GO" id="GO:0009234">
    <property type="term" value="P:menaquinone biosynthetic process"/>
    <property type="evidence" value="ECO:0007669"/>
    <property type="project" value="UniProtKB-UniRule"/>
</dbReference>
<dbReference type="GO" id="GO:0032259">
    <property type="term" value="P:methylation"/>
    <property type="evidence" value="ECO:0007669"/>
    <property type="project" value="UniProtKB-KW"/>
</dbReference>
<dbReference type="CDD" id="cd02440">
    <property type="entry name" value="AdoMet_MTases"/>
    <property type="match status" value="1"/>
</dbReference>
<dbReference type="Gene3D" id="3.40.50.150">
    <property type="entry name" value="Vaccinia Virus protein VP39"/>
    <property type="match status" value="1"/>
</dbReference>
<dbReference type="HAMAP" id="MF_01813">
    <property type="entry name" value="MenG_UbiE_methyltr"/>
    <property type="match status" value="1"/>
</dbReference>
<dbReference type="InterPro" id="IPR029063">
    <property type="entry name" value="SAM-dependent_MTases_sf"/>
</dbReference>
<dbReference type="InterPro" id="IPR004033">
    <property type="entry name" value="UbiE/COQ5_MeTrFase"/>
</dbReference>
<dbReference type="InterPro" id="IPR023576">
    <property type="entry name" value="UbiE/COQ5_MeTrFase_CS"/>
</dbReference>
<dbReference type="NCBIfam" id="TIGR01934">
    <property type="entry name" value="MenG_MenH_UbiE"/>
    <property type="match status" value="1"/>
</dbReference>
<dbReference type="NCBIfam" id="NF001242">
    <property type="entry name" value="PRK00216.1-3"/>
    <property type="match status" value="1"/>
</dbReference>
<dbReference type="NCBIfam" id="NF001244">
    <property type="entry name" value="PRK00216.1-5"/>
    <property type="match status" value="1"/>
</dbReference>
<dbReference type="PANTHER" id="PTHR43591:SF24">
    <property type="entry name" value="2-METHOXY-6-POLYPRENYL-1,4-BENZOQUINOL METHYLASE, MITOCHONDRIAL"/>
    <property type="match status" value="1"/>
</dbReference>
<dbReference type="PANTHER" id="PTHR43591">
    <property type="entry name" value="METHYLTRANSFERASE"/>
    <property type="match status" value="1"/>
</dbReference>
<dbReference type="Pfam" id="PF01209">
    <property type="entry name" value="Ubie_methyltran"/>
    <property type="match status" value="1"/>
</dbReference>
<dbReference type="SUPFAM" id="SSF53335">
    <property type="entry name" value="S-adenosyl-L-methionine-dependent methyltransferases"/>
    <property type="match status" value="1"/>
</dbReference>
<dbReference type="PROSITE" id="PS51608">
    <property type="entry name" value="SAM_MT_UBIE"/>
    <property type="match status" value="1"/>
</dbReference>
<dbReference type="PROSITE" id="PS01183">
    <property type="entry name" value="UBIE_1"/>
    <property type="match status" value="1"/>
</dbReference>
<dbReference type="PROSITE" id="PS01184">
    <property type="entry name" value="UBIE_2"/>
    <property type="match status" value="1"/>
</dbReference>
<evidence type="ECO:0000255" key="1">
    <source>
        <dbReference type="HAMAP-Rule" id="MF_01813"/>
    </source>
</evidence>
<protein>
    <recommendedName>
        <fullName evidence="1">Ubiquinone/menaquinone biosynthesis C-methyltransferase UbiE</fullName>
        <ecNumber evidence="1">2.1.1.163</ecNumber>
        <ecNumber evidence="1">2.1.1.201</ecNumber>
    </recommendedName>
    <alternativeName>
        <fullName evidence="1">2-methoxy-6-polyprenyl-1,4-benzoquinol methylase</fullName>
    </alternativeName>
    <alternativeName>
        <fullName evidence="1">Demethylmenaquinone methyltransferase</fullName>
    </alternativeName>
</protein>
<organism>
    <name type="scientific">Xylella fastidiosa (strain Temecula1 / ATCC 700964)</name>
    <dbReference type="NCBI Taxonomy" id="183190"/>
    <lineage>
        <taxon>Bacteria</taxon>
        <taxon>Pseudomonadati</taxon>
        <taxon>Pseudomonadota</taxon>
        <taxon>Gammaproteobacteria</taxon>
        <taxon>Lysobacterales</taxon>
        <taxon>Lysobacteraceae</taxon>
        <taxon>Xylella</taxon>
    </lineage>
</organism>
<name>UBIE_XYLFT</name>
<feature type="chain" id="PRO_0000193356" description="Ubiquinone/menaquinone biosynthesis C-methyltransferase UbiE">
    <location>
        <begin position="1"/>
        <end position="253"/>
    </location>
</feature>
<feature type="binding site" evidence="1">
    <location>
        <position position="76"/>
    </location>
    <ligand>
        <name>S-adenosyl-L-methionine</name>
        <dbReference type="ChEBI" id="CHEBI:59789"/>
    </ligand>
</feature>
<feature type="binding site" evidence="1">
    <location>
        <position position="97"/>
    </location>
    <ligand>
        <name>S-adenosyl-L-methionine</name>
        <dbReference type="ChEBI" id="CHEBI:59789"/>
    </ligand>
</feature>
<feature type="binding site" evidence="1">
    <location>
        <begin position="125"/>
        <end position="126"/>
    </location>
    <ligand>
        <name>S-adenosyl-L-methionine</name>
        <dbReference type="ChEBI" id="CHEBI:59789"/>
    </ligand>
</feature>
<feature type="binding site" evidence="1">
    <location>
        <position position="142"/>
    </location>
    <ligand>
        <name>S-adenosyl-L-methionine</name>
        <dbReference type="ChEBI" id="CHEBI:59789"/>
    </ligand>
</feature>
<accession>Q87DI1</accession>
<comment type="function">
    <text evidence="1">Methyltransferase required for the conversion of demethylmenaquinol (DMKH2) to menaquinol (MKH2) and the conversion of 2-polyprenyl-6-methoxy-1,4-benzoquinol (DDMQH2) to 2-polyprenyl-3-methyl-6-methoxy-1,4-benzoquinol (DMQH2).</text>
</comment>
<comment type="catalytic activity">
    <reaction evidence="1">
        <text>a 2-demethylmenaquinol + S-adenosyl-L-methionine = a menaquinol + S-adenosyl-L-homocysteine + H(+)</text>
        <dbReference type="Rhea" id="RHEA:42640"/>
        <dbReference type="Rhea" id="RHEA-COMP:9539"/>
        <dbReference type="Rhea" id="RHEA-COMP:9563"/>
        <dbReference type="ChEBI" id="CHEBI:15378"/>
        <dbReference type="ChEBI" id="CHEBI:18151"/>
        <dbReference type="ChEBI" id="CHEBI:55437"/>
        <dbReference type="ChEBI" id="CHEBI:57856"/>
        <dbReference type="ChEBI" id="CHEBI:59789"/>
        <dbReference type="EC" id="2.1.1.163"/>
    </reaction>
</comment>
<comment type="catalytic activity">
    <reaction evidence="1">
        <text>a 2-methoxy-6-(all-trans-polyprenyl)benzene-1,4-diol + S-adenosyl-L-methionine = a 5-methoxy-2-methyl-3-(all-trans-polyprenyl)benzene-1,4-diol + S-adenosyl-L-homocysteine + H(+)</text>
        <dbReference type="Rhea" id="RHEA:28286"/>
        <dbReference type="Rhea" id="RHEA-COMP:10858"/>
        <dbReference type="Rhea" id="RHEA-COMP:10859"/>
        <dbReference type="ChEBI" id="CHEBI:15378"/>
        <dbReference type="ChEBI" id="CHEBI:57856"/>
        <dbReference type="ChEBI" id="CHEBI:59789"/>
        <dbReference type="ChEBI" id="CHEBI:84166"/>
        <dbReference type="ChEBI" id="CHEBI:84167"/>
        <dbReference type="EC" id="2.1.1.201"/>
    </reaction>
</comment>
<comment type="pathway">
    <text evidence="1">Quinol/quinone metabolism; menaquinone biosynthesis; menaquinol from 1,4-dihydroxy-2-naphthoate: step 2/2.</text>
</comment>
<comment type="pathway">
    <text evidence="1">Cofactor biosynthesis; ubiquinone biosynthesis.</text>
</comment>
<comment type="similarity">
    <text evidence="1">Belongs to the class I-like SAM-binding methyltransferase superfamily. MenG/UbiE family.</text>
</comment>
<gene>
    <name evidence="1" type="primary">ubiE</name>
    <name type="ordered locus">PD_0704</name>
</gene>
<keyword id="KW-0474">Menaquinone biosynthesis</keyword>
<keyword id="KW-0489">Methyltransferase</keyword>
<keyword id="KW-1185">Reference proteome</keyword>
<keyword id="KW-0949">S-adenosyl-L-methionine</keyword>
<keyword id="KW-0808">Transferase</keyword>
<keyword id="KW-0831">Ubiquinone biosynthesis</keyword>
<proteinExistence type="inferred from homology"/>
<sequence length="253" mass="28254">MSESSEKTSTTHFGFRQVAAKDKKTLVAEVFTSVSRRYDLMNDLMSLGIHRAWKRYFVATAQVKSGDRVLDLAGGTGDIAMLLKNRVGAEGSIVLGDINASMLSVGRDRLIDRGVVARLDYVQCNAEALPFQDKCFDLVTMSFGLRNVTDKDAALREMFRVLKVGGQARVLEFSAVTAEWFKPIYDFHSFQVLPRLGRLFARDAASYRYLAESIRKHPPQEELQAMMGSAGFERCGYRNLTGGIVAIHSGYKY</sequence>
<reference key="1">
    <citation type="journal article" date="2003" name="J. Bacteriol.">
        <title>Comparative analyses of the complete genome sequences of Pierce's disease and citrus variegated chlorosis strains of Xylella fastidiosa.</title>
        <authorList>
            <person name="Van Sluys M.A."/>
            <person name="de Oliveira M.C."/>
            <person name="Monteiro-Vitorello C.B."/>
            <person name="Miyaki C.Y."/>
            <person name="Furlan L.R."/>
            <person name="Camargo L.E.A."/>
            <person name="da Silva A.C.R."/>
            <person name="Moon D.H."/>
            <person name="Takita M.A."/>
            <person name="Lemos E.G.M."/>
            <person name="Machado M.A."/>
            <person name="Ferro M.I.T."/>
            <person name="da Silva F.R."/>
            <person name="Goldman M.H.S."/>
            <person name="Goldman G.H."/>
            <person name="Lemos M.V.F."/>
            <person name="El-Dorry H."/>
            <person name="Tsai S.M."/>
            <person name="Carrer H."/>
            <person name="Carraro D.M."/>
            <person name="de Oliveira R.C."/>
            <person name="Nunes L.R."/>
            <person name="Siqueira W.J."/>
            <person name="Coutinho L.L."/>
            <person name="Kimura E.T."/>
            <person name="Ferro E.S."/>
            <person name="Harakava R."/>
            <person name="Kuramae E.E."/>
            <person name="Marino C.L."/>
            <person name="Giglioti E."/>
            <person name="Abreu I.L."/>
            <person name="Alves L.M.C."/>
            <person name="do Amaral A.M."/>
            <person name="Baia G.S."/>
            <person name="Blanco S.R."/>
            <person name="Brito M.S."/>
            <person name="Cannavan F.S."/>
            <person name="Celestino A.V."/>
            <person name="da Cunha A.F."/>
            <person name="Fenille R.C."/>
            <person name="Ferro J.A."/>
            <person name="Formighieri E.F."/>
            <person name="Kishi L.T."/>
            <person name="Leoni S.G."/>
            <person name="Oliveira A.R."/>
            <person name="Rosa V.E. Jr."/>
            <person name="Sassaki F.T."/>
            <person name="Sena J.A.D."/>
            <person name="de Souza A.A."/>
            <person name="Truffi D."/>
            <person name="Tsukumo F."/>
            <person name="Yanai G.M."/>
            <person name="Zaros L.G."/>
            <person name="Civerolo E.L."/>
            <person name="Simpson A.J.G."/>
            <person name="Almeida N.F. Jr."/>
            <person name="Setubal J.C."/>
            <person name="Kitajima J.P."/>
        </authorList>
    </citation>
    <scope>NUCLEOTIDE SEQUENCE [LARGE SCALE GENOMIC DNA]</scope>
    <source>
        <strain>Temecula1 / ATCC 700964</strain>
    </source>
</reference>